<organism>
    <name type="scientific">Ethmostigmus rubripes</name>
    <name type="common">Giant centipede</name>
    <dbReference type="NCBI Taxonomy" id="62613"/>
    <lineage>
        <taxon>Eukaryota</taxon>
        <taxon>Metazoa</taxon>
        <taxon>Ecdysozoa</taxon>
        <taxon>Arthropoda</taxon>
        <taxon>Myriapoda</taxon>
        <taxon>Chilopoda</taxon>
        <taxon>Pleurostigmophora</taxon>
        <taxon>Scolopendromorpha</taxon>
        <taxon>Scolopendridae</taxon>
        <taxon>Ethmostigmus</taxon>
    </lineage>
</organism>
<name>TX85D_ETHRU</name>
<evidence type="ECO:0000250" key="1">
    <source>
        <dbReference type="UniProtKB" id="A0A023W0B6"/>
    </source>
</evidence>
<evidence type="ECO:0000255" key="2"/>
<evidence type="ECO:0000305" key="3"/>
<evidence type="ECO:0000305" key="4">
    <source>
    </source>
</evidence>
<evidence type="ECO:0000312" key="5">
    <source>
        <dbReference type="EMBL" id="AHY22611.1"/>
    </source>
</evidence>
<protein>
    <recommendedName>
        <fullName evidence="3">U-scoloptoxin-Er5d</fullName>
        <shortName evidence="3">U-SLPTX-Er5d</shortName>
    </recommendedName>
    <alternativeName>
        <fullName evidence="5">U-scoloptoxin-Er5-like</fullName>
        <shortName evidence="5">U-SLPTX-Er5-like</shortName>
    </alternativeName>
    <alternativeName>
        <fullName evidence="1">U-scoloptoxin-Er5.1c</fullName>
        <shortName evidence="1">U-SLPTX-Er5.1c</shortName>
    </alternativeName>
</protein>
<proteinExistence type="evidence at transcript level"/>
<dbReference type="EMBL" id="KF130760">
    <property type="protein sequence ID" value="AHY22611.1"/>
    <property type="molecule type" value="mRNA"/>
</dbReference>
<dbReference type="SMR" id="A0A023W0C3"/>
<dbReference type="GO" id="GO:0005576">
    <property type="term" value="C:extracellular region"/>
    <property type="evidence" value="ECO:0007669"/>
    <property type="project" value="UniProtKB-SubCell"/>
</dbReference>
<dbReference type="GO" id="GO:0090729">
    <property type="term" value="F:toxin activity"/>
    <property type="evidence" value="ECO:0007669"/>
    <property type="project" value="UniProtKB-KW"/>
</dbReference>
<comment type="subcellular location">
    <subcellularLocation>
        <location evidence="4">Secreted</location>
    </subcellularLocation>
</comment>
<comment type="tissue specificity">
    <text evidence="4">Expressed by the venom gland.</text>
</comment>
<comment type="similarity">
    <text evidence="3">Belongs to the scoloptoxin-08 family.</text>
</comment>
<keyword id="KW-0165">Cleavage on pair of basic residues</keyword>
<keyword id="KW-0873">Pyrrolidone carboxylic acid</keyword>
<keyword id="KW-0677">Repeat</keyword>
<keyword id="KW-0964">Secreted</keyword>
<keyword id="KW-0732">Signal</keyword>
<keyword id="KW-0800">Toxin</keyword>
<sequence length="124" mass="15590">MKTNCEFPLLCLLIVLVANVEGEVEDNELKMVKRLWRNWEDPEQRQLLDQEAEQEKQREKRLWRNWEDLELRQLLNEFAENQREKRLWRNWERRQVANEDDGEKPKELWRNWEDLKRRQVGRFE</sequence>
<feature type="signal peptide" evidence="2">
    <location>
        <begin position="1"/>
        <end position="22"/>
    </location>
</feature>
<feature type="propeptide" id="PRO_0000446744" evidence="1">
    <location>
        <begin position="23"/>
        <end position="94"/>
    </location>
</feature>
<feature type="peptide" id="PRO_5001527048" description="U-scoloptoxin-Er5d" evidence="1">
    <location>
        <begin position="95"/>
        <end position="111"/>
    </location>
</feature>
<feature type="propeptide" id="PRO_0000446745" evidence="1">
    <location>
        <begin position="112"/>
        <end position="124"/>
    </location>
</feature>
<feature type="repeat" description="RLWRNWE 1" evidence="4">
    <location>
        <begin position="34"/>
        <end position="40"/>
    </location>
</feature>
<feature type="repeat" description="RLWRNWE 2" evidence="4">
    <location>
        <begin position="61"/>
        <end position="67"/>
    </location>
</feature>
<feature type="repeat" description="RLWRNWE 3" evidence="4">
    <location>
        <begin position="86"/>
        <end position="92"/>
    </location>
</feature>
<feature type="repeat" description="RLWRNWE 4; approximate" evidence="4">
    <location>
        <begin position="107"/>
        <end position="113"/>
    </location>
</feature>
<feature type="modified residue" description="Pyrrolidone carboxylic acid" evidence="1">
    <location>
        <position position="95"/>
    </location>
</feature>
<accession>A0A023W0C3</accession>
<reference key="1">
    <citation type="journal article" date="2014" name="J. Proteomics">
        <title>Multifunctional warheads: diversification of the toxin arsenal of centipedes via novel multidomain transcripts.</title>
        <authorList>
            <person name="Undheim E.A."/>
            <person name="Sunagar K."/>
            <person name="Hamilton B.R."/>
            <person name="Jones A."/>
            <person name="Venter D.J."/>
            <person name="Fry B.G."/>
            <person name="King G.F."/>
        </authorList>
    </citation>
    <scope>NUCLEOTIDE SEQUENCE [MRNA]</scope>
    <source>
        <tissue>Venom gland</tissue>
    </source>
</reference>